<dbReference type="EMBL" id="BA000022">
    <property type="protein sequence ID" value="BAA17335.1"/>
    <property type="molecule type" value="Genomic_DNA"/>
</dbReference>
<dbReference type="PIR" id="S77488">
    <property type="entry name" value="S77488"/>
</dbReference>
<dbReference type="SMR" id="P73306"/>
<dbReference type="FunCoup" id="P73306">
    <property type="interactions" value="486"/>
</dbReference>
<dbReference type="STRING" id="1148.gene:10498198"/>
<dbReference type="PaxDb" id="1148-1652413"/>
<dbReference type="EnsemblBacteria" id="BAA17335">
    <property type="protein sequence ID" value="BAA17335"/>
    <property type="gene ID" value="BAA17335"/>
</dbReference>
<dbReference type="KEGG" id="syn:sll1810"/>
<dbReference type="eggNOG" id="COG0097">
    <property type="taxonomic scope" value="Bacteria"/>
</dbReference>
<dbReference type="InParanoid" id="P73306"/>
<dbReference type="PhylomeDB" id="P73306"/>
<dbReference type="Proteomes" id="UP000001425">
    <property type="component" value="Chromosome"/>
</dbReference>
<dbReference type="GO" id="GO:0022625">
    <property type="term" value="C:cytosolic large ribosomal subunit"/>
    <property type="evidence" value="ECO:0000318"/>
    <property type="project" value="GO_Central"/>
</dbReference>
<dbReference type="GO" id="GO:0019843">
    <property type="term" value="F:rRNA binding"/>
    <property type="evidence" value="ECO:0007669"/>
    <property type="project" value="UniProtKB-UniRule"/>
</dbReference>
<dbReference type="GO" id="GO:0003735">
    <property type="term" value="F:structural constituent of ribosome"/>
    <property type="evidence" value="ECO:0000318"/>
    <property type="project" value="GO_Central"/>
</dbReference>
<dbReference type="GO" id="GO:0002181">
    <property type="term" value="P:cytoplasmic translation"/>
    <property type="evidence" value="ECO:0000318"/>
    <property type="project" value="GO_Central"/>
</dbReference>
<dbReference type="FunFam" id="3.90.930.12:FF:000001">
    <property type="entry name" value="50S ribosomal protein L6"/>
    <property type="match status" value="1"/>
</dbReference>
<dbReference type="FunFam" id="3.90.930.12:FF:000002">
    <property type="entry name" value="50S ribosomal protein L6"/>
    <property type="match status" value="1"/>
</dbReference>
<dbReference type="Gene3D" id="3.90.930.12">
    <property type="entry name" value="Ribosomal protein L6, alpha-beta domain"/>
    <property type="match status" value="2"/>
</dbReference>
<dbReference type="HAMAP" id="MF_01365_B">
    <property type="entry name" value="Ribosomal_uL6_B"/>
    <property type="match status" value="1"/>
</dbReference>
<dbReference type="InterPro" id="IPR000702">
    <property type="entry name" value="Ribosomal_uL6-like"/>
</dbReference>
<dbReference type="InterPro" id="IPR036789">
    <property type="entry name" value="Ribosomal_uL6-like_a/b-dom_sf"/>
</dbReference>
<dbReference type="InterPro" id="IPR020040">
    <property type="entry name" value="Ribosomal_uL6_a/b-dom"/>
</dbReference>
<dbReference type="InterPro" id="IPR019906">
    <property type="entry name" value="Ribosomal_uL6_bac-type"/>
</dbReference>
<dbReference type="InterPro" id="IPR002358">
    <property type="entry name" value="Ribosomal_uL6_CS"/>
</dbReference>
<dbReference type="NCBIfam" id="TIGR03654">
    <property type="entry name" value="L6_bact"/>
    <property type="match status" value="1"/>
</dbReference>
<dbReference type="PANTHER" id="PTHR11655">
    <property type="entry name" value="60S/50S RIBOSOMAL PROTEIN L6/L9"/>
    <property type="match status" value="1"/>
</dbReference>
<dbReference type="PANTHER" id="PTHR11655:SF14">
    <property type="entry name" value="LARGE RIBOSOMAL SUBUNIT PROTEIN UL6M"/>
    <property type="match status" value="1"/>
</dbReference>
<dbReference type="Pfam" id="PF00347">
    <property type="entry name" value="Ribosomal_L6"/>
    <property type="match status" value="2"/>
</dbReference>
<dbReference type="PIRSF" id="PIRSF002162">
    <property type="entry name" value="Ribosomal_L6"/>
    <property type="match status" value="1"/>
</dbReference>
<dbReference type="PRINTS" id="PR00059">
    <property type="entry name" value="RIBOSOMALL6"/>
</dbReference>
<dbReference type="SUPFAM" id="SSF56053">
    <property type="entry name" value="Ribosomal protein L6"/>
    <property type="match status" value="2"/>
</dbReference>
<dbReference type="PROSITE" id="PS00525">
    <property type="entry name" value="RIBOSOMAL_L6_1"/>
    <property type="match status" value="1"/>
</dbReference>
<reference key="1">
    <citation type="journal article" date="1996" name="DNA Res.">
        <title>Sequence analysis of the genome of the unicellular cyanobacterium Synechocystis sp. strain PCC6803. II. Sequence determination of the entire genome and assignment of potential protein-coding regions.</title>
        <authorList>
            <person name="Kaneko T."/>
            <person name="Sato S."/>
            <person name="Kotani H."/>
            <person name="Tanaka A."/>
            <person name="Asamizu E."/>
            <person name="Nakamura Y."/>
            <person name="Miyajima N."/>
            <person name="Hirosawa M."/>
            <person name="Sugiura M."/>
            <person name="Sasamoto S."/>
            <person name="Kimura T."/>
            <person name="Hosouchi T."/>
            <person name="Matsuno A."/>
            <person name="Muraki A."/>
            <person name="Nakazaki N."/>
            <person name="Naruo K."/>
            <person name="Okumura S."/>
            <person name="Shimpo S."/>
            <person name="Takeuchi C."/>
            <person name="Wada T."/>
            <person name="Watanabe A."/>
            <person name="Yamada M."/>
            <person name="Yasuda M."/>
            <person name="Tabata S."/>
        </authorList>
    </citation>
    <scope>NUCLEOTIDE SEQUENCE [LARGE SCALE GENOMIC DNA]</scope>
    <source>
        <strain>ATCC 27184 / PCC 6803 / Kazusa</strain>
    </source>
</reference>
<keyword id="KW-1185">Reference proteome</keyword>
<keyword id="KW-0687">Ribonucleoprotein</keyword>
<keyword id="KW-0689">Ribosomal protein</keyword>
<keyword id="KW-0694">RNA-binding</keyword>
<keyword id="KW-0699">rRNA-binding</keyword>
<organism>
    <name type="scientific">Synechocystis sp. (strain ATCC 27184 / PCC 6803 / Kazusa)</name>
    <dbReference type="NCBI Taxonomy" id="1111708"/>
    <lineage>
        <taxon>Bacteria</taxon>
        <taxon>Bacillati</taxon>
        <taxon>Cyanobacteriota</taxon>
        <taxon>Cyanophyceae</taxon>
        <taxon>Synechococcales</taxon>
        <taxon>Merismopediaceae</taxon>
        <taxon>Synechocystis</taxon>
    </lineage>
</organism>
<evidence type="ECO:0000255" key="1">
    <source>
        <dbReference type="HAMAP-Rule" id="MF_01365"/>
    </source>
</evidence>
<evidence type="ECO:0000305" key="2"/>
<name>RL6_SYNY3</name>
<gene>
    <name evidence="1" type="primary">rplF</name>
    <name evidence="1" type="synonym">rpl6</name>
    <name type="ordered locus">sll1810</name>
</gene>
<proteinExistence type="inferred from homology"/>
<accession>P73306</accession>
<protein>
    <recommendedName>
        <fullName evidence="1">Large ribosomal subunit protein uL6</fullName>
    </recommendedName>
    <alternativeName>
        <fullName evidence="2">50S ribosomal protein L6</fullName>
    </alternativeName>
</protein>
<feature type="chain" id="PRO_0000131070" description="Large ribosomal subunit protein uL6">
    <location>
        <begin position="1"/>
        <end position="179"/>
    </location>
</feature>
<comment type="function">
    <text evidence="1">This protein binds to the 23S rRNA, and is important in its secondary structure. It is located near the subunit interface in the base of the L7/L12 stalk, and near the tRNA binding site of the peptidyltransferase center.</text>
</comment>
<comment type="subunit">
    <text evidence="1">Part of the 50S ribosomal subunit.</text>
</comment>
<comment type="similarity">
    <text evidence="1">Belongs to the universal ribosomal protein uL6 family.</text>
</comment>
<sequence>MSRIGKRPIPLPAKVSVDIQGSHLSVKGPKGSLERQLPEKVIVAQEGETITVTRQDESRTARERHGLVRTLVANMVDGVAQGFERRLEIQGVGYRAQAQGNKLTLNVGYSKPVEMTMPQGIEVKVENNTQVIVSGIDKELLGNTAAKIRAVRPPEPYKGKGIRYQGEYVRRKAGKTGKK</sequence>